<reference key="1">
    <citation type="submission" date="2007-10" db="EMBL/GenBank/DDBJ databases">
        <title>Complete sequence of Shewanella pealeana ATCC 700345.</title>
        <authorList>
            <consortium name="US DOE Joint Genome Institute"/>
            <person name="Copeland A."/>
            <person name="Lucas S."/>
            <person name="Lapidus A."/>
            <person name="Barry K."/>
            <person name="Glavina del Rio T."/>
            <person name="Dalin E."/>
            <person name="Tice H."/>
            <person name="Pitluck S."/>
            <person name="Chertkov O."/>
            <person name="Brettin T."/>
            <person name="Bruce D."/>
            <person name="Detter J.C."/>
            <person name="Han C."/>
            <person name="Schmutz J."/>
            <person name="Larimer F."/>
            <person name="Land M."/>
            <person name="Hauser L."/>
            <person name="Kyrpides N."/>
            <person name="Kim E."/>
            <person name="Zhao J.-S.Z."/>
            <person name="Manno D."/>
            <person name="Hawari J."/>
            <person name="Richardson P."/>
        </authorList>
    </citation>
    <scope>NUCLEOTIDE SEQUENCE [LARGE SCALE GENOMIC DNA]</scope>
    <source>
        <strain>ATCC 700345 / ANG-SQ1</strain>
    </source>
</reference>
<sequence length="444" mass="51007">MTDAVWNERRLGEDKQRRNDHRSPYQRDRARILHSAAFRRLQAKTQVLGVGMNDFYRTRLTHSLEVSQIGTGICAQLKQKQPQHNPLLDSMSLIESLCLAHDIGHPPFGHGGEVALNYMMRKHGGFEGNGQTFRILTRLEPYTEHFGMNLCRRTLLGILKYPAPYTNLCVGTPEESVDDFRQLKPSKWPPVKGIFDDDREILDWVLAPLSQQDRAKFLSSHVVKDIKHKRTRFKSLDCSIMELADDIAYAVHDLEDAIVMGIVSEQQWHTDVSLPLSQSNDPWLKNEFATISQRLFSAKHHLRKDAIGTLVNGFVTAIAITEVDGFEEPLLRYNAALEPAFHEALSILKQFVYKYVIRKPEIQMLEYKGQQIVMELFEAFISDPERLLPLNTQERWLAHERLGENSHRVIADYISGMTDGFAARLHQHLFSAKSHSMMDFNSDF</sequence>
<protein>
    <recommendedName>
        <fullName evidence="1">Deoxyguanosinetriphosphate triphosphohydrolase-like protein</fullName>
    </recommendedName>
</protein>
<proteinExistence type="inferred from homology"/>
<comment type="similarity">
    <text evidence="1">Belongs to the dGTPase family. Type 2 subfamily.</text>
</comment>
<evidence type="ECO:0000255" key="1">
    <source>
        <dbReference type="HAMAP-Rule" id="MF_01212"/>
    </source>
</evidence>
<evidence type="ECO:0000255" key="2">
    <source>
        <dbReference type="PROSITE-ProRule" id="PRU01175"/>
    </source>
</evidence>
<evidence type="ECO:0000256" key="3">
    <source>
        <dbReference type="SAM" id="MobiDB-lite"/>
    </source>
</evidence>
<keyword id="KW-0378">Hydrolase</keyword>
<keyword id="KW-1185">Reference proteome</keyword>
<feature type="chain" id="PRO_1000138930" description="Deoxyguanosinetriphosphate triphosphohydrolase-like protein">
    <location>
        <begin position="1"/>
        <end position="444"/>
    </location>
</feature>
<feature type="domain" description="HD" evidence="2">
    <location>
        <begin position="59"/>
        <end position="250"/>
    </location>
</feature>
<feature type="region of interest" description="Disordered" evidence="3">
    <location>
        <begin position="1"/>
        <end position="28"/>
    </location>
</feature>
<name>DGTL1_SHEPA</name>
<organism>
    <name type="scientific">Shewanella pealeana (strain ATCC 700345 / ANG-SQ1)</name>
    <dbReference type="NCBI Taxonomy" id="398579"/>
    <lineage>
        <taxon>Bacteria</taxon>
        <taxon>Pseudomonadati</taxon>
        <taxon>Pseudomonadota</taxon>
        <taxon>Gammaproteobacteria</taxon>
        <taxon>Alteromonadales</taxon>
        <taxon>Shewanellaceae</taxon>
        <taxon>Shewanella</taxon>
    </lineage>
</organism>
<gene>
    <name type="ordered locus">Spea_2046</name>
</gene>
<accession>A8H479</accession>
<dbReference type="EMBL" id="CP000851">
    <property type="protein sequence ID" value="ABV87366.1"/>
    <property type="molecule type" value="Genomic_DNA"/>
</dbReference>
<dbReference type="RefSeq" id="WP_012155282.1">
    <property type="nucleotide sequence ID" value="NC_009901.1"/>
</dbReference>
<dbReference type="SMR" id="A8H479"/>
<dbReference type="STRING" id="398579.Spea_2046"/>
<dbReference type="KEGG" id="spl:Spea_2046"/>
<dbReference type="eggNOG" id="COG0232">
    <property type="taxonomic scope" value="Bacteria"/>
</dbReference>
<dbReference type="HOGENOM" id="CLU_028163_0_0_6"/>
<dbReference type="OrthoDB" id="9803619at2"/>
<dbReference type="Proteomes" id="UP000002608">
    <property type="component" value="Chromosome"/>
</dbReference>
<dbReference type="GO" id="GO:0008832">
    <property type="term" value="F:dGTPase activity"/>
    <property type="evidence" value="ECO:0007669"/>
    <property type="project" value="TreeGrafter"/>
</dbReference>
<dbReference type="GO" id="GO:0006203">
    <property type="term" value="P:dGTP catabolic process"/>
    <property type="evidence" value="ECO:0007669"/>
    <property type="project" value="TreeGrafter"/>
</dbReference>
<dbReference type="CDD" id="cd00077">
    <property type="entry name" value="HDc"/>
    <property type="match status" value="1"/>
</dbReference>
<dbReference type="Gene3D" id="1.10.3210.10">
    <property type="entry name" value="Hypothetical protein af1432"/>
    <property type="match status" value="1"/>
</dbReference>
<dbReference type="HAMAP" id="MF_01212">
    <property type="entry name" value="dGTPase_type2"/>
    <property type="match status" value="1"/>
</dbReference>
<dbReference type="InterPro" id="IPR006261">
    <property type="entry name" value="dGTPase"/>
</dbReference>
<dbReference type="InterPro" id="IPR050135">
    <property type="entry name" value="dGTPase-like"/>
</dbReference>
<dbReference type="InterPro" id="IPR023023">
    <property type="entry name" value="dNTPase_2"/>
</dbReference>
<dbReference type="InterPro" id="IPR003607">
    <property type="entry name" value="HD/PDEase_dom"/>
</dbReference>
<dbReference type="InterPro" id="IPR006674">
    <property type="entry name" value="HD_domain"/>
</dbReference>
<dbReference type="InterPro" id="IPR026875">
    <property type="entry name" value="PHydrolase_assoc_dom"/>
</dbReference>
<dbReference type="NCBIfam" id="NF041026">
    <property type="entry name" value="antiphage_dGTPase"/>
    <property type="match status" value="1"/>
</dbReference>
<dbReference type="NCBIfam" id="TIGR01353">
    <property type="entry name" value="dGTP_triPase"/>
    <property type="match status" value="1"/>
</dbReference>
<dbReference type="NCBIfam" id="NF003701">
    <property type="entry name" value="PRK05318.1"/>
    <property type="match status" value="1"/>
</dbReference>
<dbReference type="PANTHER" id="PTHR11373:SF40">
    <property type="entry name" value="DEOXYGUANOSINETRIPHOSPHATE TRIPHOSPHOHYDROLASE-LIKE PROTEIN 2"/>
    <property type="match status" value="1"/>
</dbReference>
<dbReference type="PANTHER" id="PTHR11373">
    <property type="entry name" value="DEOXYNUCLEOSIDE TRIPHOSPHATE TRIPHOSPHOHYDROLASE"/>
    <property type="match status" value="1"/>
</dbReference>
<dbReference type="Pfam" id="PF01966">
    <property type="entry name" value="HD"/>
    <property type="match status" value="1"/>
</dbReference>
<dbReference type="Pfam" id="PF13286">
    <property type="entry name" value="HD_assoc"/>
    <property type="match status" value="1"/>
</dbReference>
<dbReference type="SMART" id="SM00471">
    <property type="entry name" value="HDc"/>
    <property type="match status" value="1"/>
</dbReference>
<dbReference type="SUPFAM" id="SSF109604">
    <property type="entry name" value="HD-domain/PDEase-like"/>
    <property type="match status" value="1"/>
</dbReference>
<dbReference type="PROSITE" id="PS51831">
    <property type="entry name" value="HD"/>
    <property type="match status" value="1"/>
</dbReference>